<accession>Q5B0J9</accession>
<accession>C8V3J0</accession>
<sequence length="563" mass="60912">MSSYGGSGGYQRDSYRSGGGGGYSNGYSNGHGGGYGGRGGGYGGGGGSGYGGGYGGGGYGGGGYGRGGGGAGAGAGGDRMGNLGSGLKKQDWDLDTLPKFEKSFYKEHPDVTARSQREVDEFRKKCEMTVQGRDVPRPVETFDEAGFPQYVLSEVKAQGFEKPTAIQSQGWPMALSGRDVVGIAETGSGKTLSYCLPAIVHINAQPLLAPGDGPIVLILAPTRELAVQIQAEISKFGKSSRIRNTCVYGGVPKGPQIRDLSRGVEVCIATPGRLIDMLEAGRTNLRRVTYLVLDEADRMLDMGFEPQIRKIISQIRPDRQTCMWSATWPKEVRQLASDFLNNYIQVNIGSMDLSANHRITQIVEVISEFEKRDRMIKHLEKIMENRGNKCLVFTGTKRIADEITRFLRQDGWPALSIHGDKQQQERDWVLNEFKTGKSPIMVATDVASRGIDVRDITHVINYDYPNNSEDYVHRIGRTGRAGAKGTAITFFTTDNAKQARDLVTILSEAKQQIDPRLAEMVRYSGGGGHGGGYGRWGGRGGGRGRGGNFTASNAAPLGNNRRW</sequence>
<evidence type="ECO:0000250" key="1"/>
<evidence type="ECO:0000255" key="2">
    <source>
        <dbReference type="PROSITE-ProRule" id="PRU00541"/>
    </source>
</evidence>
<evidence type="ECO:0000255" key="3">
    <source>
        <dbReference type="PROSITE-ProRule" id="PRU00542"/>
    </source>
</evidence>
<evidence type="ECO:0000256" key="4">
    <source>
        <dbReference type="SAM" id="MobiDB-lite"/>
    </source>
</evidence>
<evidence type="ECO:0000305" key="5"/>
<name>DBP2_EMENI</name>
<proteinExistence type="inferred from homology"/>
<keyword id="KW-0067">ATP-binding</keyword>
<keyword id="KW-0963">Cytoplasm</keyword>
<keyword id="KW-0347">Helicase</keyword>
<keyword id="KW-0378">Hydrolase</keyword>
<keyword id="KW-0866">Nonsense-mediated mRNA decay</keyword>
<keyword id="KW-0547">Nucleotide-binding</keyword>
<keyword id="KW-0539">Nucleus</keyword>
<keyword id="KW-1185">Reference proteome</keyword>
<keyword id="KW-0690">Ribosome biogenesis</keyword>
<keyword id="KW-0694">RNA-binding</keyword>
<keyword id="KW-0698">rRNA processing</keyword>
<comment type="function">
    <text evidence="1">ATP-dependent RNA helicase involved nonsense-mediated mRNA decay and ribosome biogenesis through rRNA processing.</text>
</comment>
<comment type="catalytic activity">
    <reaction>
        <text>ATP + H2O = ADP + phosphate + H(+)</text>
        <dbReference type="Rhea" id="RHEA:13065"/>
        <dbReference type="ChEBI" id="CHEBI:15377"/>
        <dbReference type="ChEBI" id="CHEBI:15378"/>
        <dbReference type="ChEBI" id="CHEBI:30616"/>
        <dbReference type="ChEBI" id="CHEBI:43474"/>
        <dbReference type="ChEBI" id="CHEBI:456216"/>
        <dbReference type="EC" id="3.6.4.13"/>
    </reaction>
</comment>
<comment type="subunit">
    <text evidence="1">Associates with polysomes.</text>
</comment>
<comment type="subcellular location">
    <subcellularLocation>
        <location evidence="1">Cytoplasm</location>
    </subcellularLocation>
    <subcellularLocation>
        <location evidence="1">Nucleus</location>
    </subcellularLocation>
</comment>
<comment type="domain">
    <text>The Q motif is unique to and characteristic of the DEAD box family of RNA helicases and controls ATP binding and hydrolysis.</text>
</comment>
<comment type="similarity">
    <text evidence="5">Belongs to the DEAD box helicase family. DDX5/DBP2 subfamily.</text>
</comment>
<organism>
    <name type="scientific">Emericella nidulans (strain FGSC A4 / ATCC 38163 / CBS 112.46 / NRRL 194 / M139)</name>
    <name type="common">Aspergillus nidulans</name>
    <dbReference type="NCBI Taxonomy" id="227321"/>
    <lineage>
        <taxon>Eukaryota</taxon>
        <taxon>Fungi</taxon>
        <taxon>Dikarya</taxon>
        <taxon>Ascomycota</taxon>
        <taxon>Pezizomycotina</taxon>
        <taxon>Eurotiomycetes</taxon>
        <taxon>Eurotiomycetidae</taxon>
        <taxon>Eurotiales</taxon>
        <taxon>Aspergillaceae</taxon>
        <taxon>Aspergillus</taxon>
        <taxon>Aspergillus subgen. Nidulantes</taxon>
    </lineage>
</organism>
<reference key="1">
    <citation type="journal article" date="2005" name="Nature">
        <title>Sequencing of Aspergillus nidulans and comparative analysis with A. fumigatus and A. oryzae.</title>
        <authorList>
            <person name="Galagan J.E."/>
            <person name="Calvo S.E."/>
            <person name="Cuomo C."/>
            <person name="Ma L.-J."/>
            <person name="Wortman J.R."/>
            <person name="Batzoglou S."/>
            <person name="Lee S.-I."/>
            <person name="Bastuerkmen M."/>
            <person name="Spevak C.C."/>
            <person name="Clutterbuck J."/>
            <person name="Kapitonov V."/>
            <person name="Jurka J."/>
            <person name="Scazzocchio C."/>
            <person name="Farman M.L."/>
            <person name="Butler J."/>
            <person name="Purcell S."/>
            <person name="Harris S."/>
            <person name="Braus G.H."/>
            <person name="Draht O."/>
            <person name="Busch S."/>
            <person name="D'Enfert C."/>
            <person name="Bouchier C."/>
            <person name="Goldman G.H."/>
            <person name="Bell-Pedersen D."/>
            <person name="Griffiths-Jones S."/>
            <person name="Doonan J.H."/>
            <person name="Yu J."/>
            <person name="Vienken K."/>
            <person name="Pain A."/>
            <person name="Freitag M."/>
            <person name="Selker E.U."/>
            <person name="Archer D.B."/>
            <person name="Penalva M.A."/>
            <person name="Oakley B.R."/>
            <person name="Momany M."/>
            <person name="Tanaka T."/>
            <person name="Kumagai T."/>
            <person name="Asai K."/>
            <person name="Machida M."/>
            <person name="Nierman W.C."/>
            <person name="Denning D.W."/>
            <person name="Caddick M.X."/>
            <person name="Hynes M."/>
            <person name="Paoletti M."/>
            <person name="Fischer R."/>
            <person name="Miller B.L."/>
            <person name="Dyer P.S."/>
            <person name="Sachs M.S."/>
            <person name="Osmani S.A."/>
            <person name="Birren B.W."/>
        </authorList>
    </citation>
    <scope>NUCLEOTIDE SEQUENCE [LARGE SCALE GENOMIC DNA]</scope>
    <source>
        <strain>FGSC A4 / ATCC 38163 / CBS 112.46 / NRRL 194 / M139</strain>
    </source>
</reference>
<reference key="2">
    <citation type="journal article" date="2009" name="Fungal Genet. Biol.">
        <title>The 2008 update of the Aspergillus nidulans genome annotation: a community effort.</title>
        <authorList>
            <person name="Wortman J.R."/>
            <person name="Gilsenan J.M."/>
            <person name="Joardar V."/>
            <person name="Deegan J."/>
            <person name="Clutterbuck J."/>
            <person name="Andersen M.R."/>
            <person name="Archer D."/>
            <person name="Bencina M."/>
            <person name="Braus G."/>
            <person name="Coutinho P."/>
            <person name="von Dohren H."/>
            <person name="Doonan J."/>
            <person name="Driessen A.J."/>
            <person name="Durek P."/>
            <person name="Espeso E."/>
            <person name="Fekete E."/>
            <person name="Flipphi M."/>
            <person name="Estrada C.G."/>
            <person name="Geysens S."/>
            <person name="Goldman G."/>
            <person name="de Groot P.W."/>
            <person name="Hansen K."/>
            <person name="Harris S.D."/>
            <person name="Heinekamp T."/>
            <person name="Helmstaedt K."/>
            <person name="Henrissat B."/>
            <person name="Hofmann G."/>
            <person name="Homan T."/>
            <person name="Horio T."/>
            <person name="Horiuchi H."/>
            <person name="James S."/>
            <person name="Jones M."/>
            <person name="Karaffa L."/>
            <person name="Karanyi Z."/>
            <person name="Kato M."/>
            <person name="Keller N."/>
            <person name="Kelly D.E."/>
            <person name="Kiel J.A."/>
            <person name="Kim J.M."/>
            <person name="van der Klei I.J."/>
            <person name="Klis F.M."/>
            <person name="Kovalchuk A."/>
            <person name="Krasevec N."/>
            <person name="Kubicek C.P."/>
            <person name="Liu B."/>
            <person name="Maccabe A."/>
            <person name="Meyer V."/>
            <person name="Mirabito P."/>
            <person name="Miskei M."/>
            <person name="Mos M."/>
            <person name="Mullins J."/>
            <person name="Nelson D.R."/>
            <person name="Nielsen J."/>
            <person name="Oakley B.R."/>
            <person name="Osmani S.A."/>
            <person name="Pakula T."/>
            <person name="Paszewski A."/>
            <person name="Paulsen I."/>
            <person name="Pilsyk S."/>
            <person name="Pocsi I."/>
            <person name="Punt P.J."/>
            <person name="Ram A.F."/>
            <person name="Ren Q."/>
            <person name="Robellet X."/>
            <person name="Robson G."/>
            <person name="Seiboth B."/>
            <person name="van Solingen P."/>
            <person name="Specht T."/>
            <person name="Sun J."/>
            <person name="Taheri-Talesh N."/>
            <person name="Takeshita N."/>
            <person name="Ussery D."/>
            <person name="vanKuyk P.A."/>
            <person name="Visser H."/>
            <person name="van de Vondervoort P.J."/>
            <person name="de Vries R.P."/>
            <person name="Walton J."/>
            <person name="Xiang X."/>
            <person name="Xiong Y."/>
            <person name="Zeng A.P."/>
            <person name="Brandt B.W."/>
            <person name="Cornell M.J."/>
            <person name="van den Hondel C.A."/>
            <person name="Visser J."/>
            <person name="Oliver S.G."/>
            <person name="Turner G."/>
        </authorList>
    </citation>
    <scope>GENOME REANNOTATION</scope>
    <source>
        <strain>FGSC A4 / ATCC 38163 / CBS 112.46 / NRRL 194 / M139</strain>
    </source>
</reference>
<gene>
    <name type="primary">dbp2</name>
    <name type="ORF">AN5931</name>
</gene>
<dbReference type="EC" id="3.6.4.13"/>
<dbReference type="EMBL" id="AACD01000101">
    <property type="protein sequence ID" value="EAA57794.1"/>
    <property type="molecule type" value="Genomic_DNA"/>
</dbReference>
<dbReference type="EMBL" id="BN001301">
    <property type="protein sequence ID" value="CBF70542.1"/>
    <property type="molecule type" value="Genomic_DNA"/>
</dbReference>
<dbReference type="RefSeq" id="XP_663535.1">
    <property type="nucleotide sequence ID" value="XM_658443.1"/>
</dbReference>
<dbReference type="SMR" id="Q5B0J9"/>
<dbReference type="FunCoup" id="Q5B0J9">
    <property type="interactions" value="1154"/>
</dbReference>
<dbReference type="STRING" id="227321.Q5B0J9"/>
<dbReference type="EnsemblFungi" id="CBF70542">
    <property type="protein sequence ID" value="CBF70542"/>
    <property type="gene ID" value="ANIA_05931"/>
</dbReference>
<dbReference type="KEGG" id="ani:ANIA_05931"/>
<dbReference type="VEuPathDB" id="FungiDB:AN5931"/>
<dbReference type="eggNOG" id="KOG0331">
    <property type="taxonomic scope" value="Eukaryota"/>
</dbReference>
<dbReference type="HOGENOM" id="CLU_003041_16_9_1"/>
<dbReference type="InParanoid" id="Q5B0J9"/>
<dbReference type="OMA" id="STMPKFE"/>
<dbReference type="OrthoDB" id="196131at2759"/>
<dbReference type="Proteomes" id="UP000000560">
    <property type="component" value="Chromosome I"/>
</dbReference>
<dbReference type="GO" id="GO:0005737">
    <property type="term" value="C:cytoplasm"/>
    <property type="evidence" value="ECO:0000318"/>
    <property type="project" value="GO_Central"/>
</dbReference>
<dbReference type="GO" id="GO:0005634">
    <property type="term" value="C:nucleus"/>
    <property type="evidence" value="ECO:0000318"/>
    <property type="project" value="GO_Central"/>
</dbReference>
<dbReference type="GO" id="GO:1990904">
    <property type="term" value="C:ribonucleoprotein complex"/>
    <property type="evidence" value="ECO:0000318"/>
    <property type="project" value="GO_Central"/>
</dbReference>
<dbReference type="GO" id="GO:0005524">
    <property type="term" value="F:ATP binding"/>
    <property type="evidence" value="ECO:0007669"/>
    <property type="project" value="UniProtKB-KW"/>
</dbReference>
<dbReference type="GO" id="GO:0016887">
    <property type="term" value="F:ATP hydrolysis activity"/>
    <property type="evidence" value="ECO:0007669"/>
    <property type="project" value="RHEA"/>
</dbReference>
<dbReference type="GO" id="GO:0003729">
    <property type="term" value="F:mRNA binding"/>
    <property type="evidence" value="ECO:0000318"/>
    <property type="project" value="GO_Central"/>
</dbReference>
<dbReference type="GO" id="GO:0003724">
    <property type="term" value="F:RNA helicase activity"/>
    <property type="evidence" value="ECO:0000318"/>
    <property type="project" value="GO_Central"/>
</dbReference>
<dbReference type="GO" id="GO:0000380">
    <property type="term" value="P:alternative mRNA splicing, via spliceosome"/>
    <property type="evidence" value="ECO:0000318"/>
    <property type="project" value="GO_Central"/>
</dbReference>
<dbReference type="GO" id="GO:0000184">
    <property type="term" value="P:nuclear-transcribed mRNA catabolic process, nonsense-mediated decay"/>
    <property type="evidence" value="ECO:0007669"/>
    <property type="project" value="UniProtKB-KW"/>
</dbReference>
<dbReference type="GO" id="GO:0006364">
    <property type="term" value="P:rRNA processing"/>
    <property type="evidence" value="ECO:0000318"/>
    <property type="project" value="GO_Central"/>
</dbReference>
<dbReference type="CDD" id="cd17966">
    <property type="entry name" value="DEADc_DDX5_DDX17"/>
    <property type="match status" value="1"/>
</dbReference>
<dbReference type="CDD" id="cd18787">
    <property type="entry name" value="SF2_C_DEAD"/>
    <property type="match status" value="1"/>
</dbReference>
<dbReference type="FunFam" id="3.40.50.300:FF:000008">
    <property type="entry name" value="ATP-dependent RNA helicase RhlB"/>
    <property type="match status" value="1"/>
</dbReference>
<dbReference type="FunFam" id="3.40.50.300:FF:000079">
    <property type="entry name" value="probable ATP-dependent RNA helicase DDX17"/>
    <property type="match status" value="1"/>
</dbReference>
<dbReference type="Gene3D" id="3.40.50.300">
    <property type="entry name" value="P-loop containing nucleotide triphosphate hydrolases"/>
    <property type="match status" value="2"/>
</dbReference>
<dbReference type="InterPro" id="IPR011545">
    <property type="entry name" value="DEAD/DEAH_box_helicase_dom"/>
</dbReference>
<dbReference type="InterPro" id="IPR014001">
    <property type="entry name" value="Helicase_ATP-bd"/>
</dbReference>
<dbReference type="InterPro" id="IPR001650">
    <property type="entry name" value="Helicase_C-like"/>
</dbReference>
<dbReference type="InterPro" id="IPR027417">
    <property type="entry name" value="P-loop_NTPase"/>
</dbReference>
<dbReference type="InterPro" id="IPR000629">
    <property type="entry name" value="RNA-helicase_DEAD-box_CS"/>
</dbReference>
<dbReference type="InterPro" id="IPR014014">
    <property type="entry name" value="RNA_helicase_DEAD_Q_motif"/>
</dbReference>
<dbReference type="PANTHER" id="PTHR47958">
    <property type="entry name" value="ATP-DEPENDENT RNA HELICASE DBP3"/>
    <property type="match status" value="1"/>
</dbReference>
<dbReference type="Pfam" id="PF00270">
    <property type="entry name" value="DEAD"/>
    <property type="match status" value="1"/>
</dbReference>
<dbReference type="Pfam" id="PF00271">
    <property type="entry name" value="Helicase_C"/>
    <property type="match status" value="1"/>
</dbReference>
<dbReference type="SMART" id="SM00487">
    <property type="entry name" value="DEXDc"/>
    <property type="match status" value="1"/>
</dbReference>
<dbReference type="SMART" id="SM00490">
    <property type="entry name" value="HELICc"/>
    <property type="match status" value="1"/>
</dbReference>
<dbReference type="SUPFAM" id="SSF52540">
    <property type="entry name" value="P-loop containing nucleoside triphosphate hydrolases"/>
    <property type="match status" value="1"/>
</dbReference>
<dbReference type="PROSITE" id="PS00039">
    <property type="entry name" value="DEAD_ATP_HELICASE"/>
    <property type="match status" value="1"/>
</dbReference>
<dbReference type="PROSITE" id="PS51192">
    <property type="entry name" value="HELICASE_ATP_BIND_1"/>
    <property type="match status" value="1"/>
</dbReference>
<dbReference type="PROSITE" id="PS51194">
    <property type="entry name" value="HELICASE_CTER"/>
    <property type="match status" value="1"/>
</dbReference>
<dbReference type="PROSITE" id="PS51195">
    <property type="entry name" value="Q_MOTIF"/>
    <property type="match status" value="1"/>
</dbReference>
<feature type="chain" id="PRO_0000232168" description="ATP-dependent RNA helicase dbp2">
    <location>
        <begin position="1"/>
        <end position="563"/>
    </location>
</feature>
<feature type="domain" description="Helicase ATP-binding" evidence="2">
    <location>
        <begin position="171"/>
        <end position="346"/>
    </location>
</feature>
<feature type="domain" description="Helicase C-terminal" evidence="3">
    <location>
        <begin position="374"/>
        <end position="521"/>
    </location>
</feature>
<feature type="region of interest" description="Disordered" evidence="4">
    <location>
        <begin position="1"/>
        <end position="42"/>
    </location>
</feature>
<feature type="region of interest" description="RNA-binding RGG-box" evidence="1">
    <location>
        <begin position="523"/>
        <end position="545"/>
    </location>
</feature>
<feature type="region of interest" description="Disordered" evidence="4">
    <location>
        <begin position="544"/>
        <end position="563"/>
    </location>
</feature>
<feature type="short sequence motif" description="Q motif">
    <location>
        <begin position="140"/>
        <end position="168"/>
    </location>
</feature>
<feature type="short sequence motif" description="DEAD box">
    <location>
        <begin position="294"/>
        <end position="297"/>
    </location>
</feature>
<feature type="compositionally biased region" description="Gly residues" evidence="4">
    <location>
        <begin position="17"/>
        <end position="42"/>
    </location>
</feature>
<feature type="binding site" evidence="2">
    <location>
        <begin position="184"/>
        <end position="191"/>
    </location>
    <ligand>
        <name>ATP</name>
        <dbReference type="ChEBI" id="CHEBI:30616"/>
    </ligand>
</feature>
<protein>
    <recommendedName>
        <fullName>ATP-dependent RNA helicase dbp2</fullName>
        <ecNumber>3.6.4.13</ecNumber>
    </recommendedName>
</protein>